<reference key="1">
    <citation type="submission" date="2006-05" db="EMBL/GenBank/DDBJ databases">
        <title>Complete sequence of chromosome of Silicibacter sp. TM1040.</title>
        <authorList>
            <consortium name="US DOE Joint Genome Institute"/>
            <person name="Copeland A."/>
            <person name="Lucas S."/>
            <person name="Lapidus A."/>
            <person name="Barry K."/>
            <person name="Detter J.C."/>
            <person name="Glavina del Rio T."/>
            <person name="Hammon N."/>
            <person name="Israni S."/>
            <person name="Dalin E."/>
            <person name="Tice H."/>
            <person name="Pitluck S."/>
            <person name="Brettin T."/>
            <person name="Bruce D."/>
            <person name="Han C."/>
            <person name="Tapia R."/>
            <person name="Goodwin L."/>
            <person name="Thompson L.S."/>
            <person name="Gilna P."/>
            <person name="Schmutz J."/>
            <person name="Larimer F."/>
            <person name="Land M."/>
            <person name="Hauser L."/>
            <person name="Kyrpides N."/>
            <person name="Kim E."/>
            <person name="Belas R."/>
            <person name="Moran M.A."/>
            <person name="Buchan A."/>
            <person name="Gonzalez J.M."/>
            <person name="Schell M.A."/>
            <person name="Sun F."/>
            <person name="Richardson P."/>
        </authorList>
    </citation>
    <scope>NUCLEOTIDE SEQUENCE [LARGE SCALE GENOMIC DNA]</scope>
    <source>
        <strain>TM1040</strain>
    </source>
</reference>
<accession>Q1GIA1</accession>
<evidence type="ECO:0000255" key="1">
    <source>
        <dbReference type="HAMAP-Rule" id="MF_00689"/>
    </source>
</evidence>
<keyword id="KW-0012">Acyltransferase</keyword>
<keyword id="KW-0963">Cytoplasm</keyword>
<keyword id="KW-1185">Reference proteome</keyword>
<keyword id="KW-0808">Transferase</keyword>
<comment type="function">
    <text evidence="1">Functions in the N-end rule pathway of protein degradation where it conjugates Leu from its aminoacyl-tRNA to the N-termini of proteins containing an N-terminal aspartate or glutamate.</text>
</comment>
<comment type="catalytic activity">
    <reaction evidence="1">
        <text>N-terminal L-glutamyl-[protein] + L-leucyl-tRNA(Leu) = N-terminal L-leucyl-L-glutamyl-[protein] + tRNA(Leu) + H(+)</text>
        <dbReference type="Rhea" id="RHEA:50412"/>
        <dbReference type="Rhea" id="RHEA-COMP:9613"/>
        <dbReference type="Rhea" id="RHEA-COMP:9622"/>
        <dbReference type="Rhea" id="RHEA-COMP:12664"/>
        <dbReference type="Rhea" id="RHEA-COMP:12668"/>
        <dbReference type="ChEBI" id="CHEBI:15378"/>
        <dbReference type="ChEBI" id="CHEBI:64721"/>
        <dbReference type="ChEBI" id="CHEBI:78442"/>
        <dbReference type="ChEBI" id="CHEBI:78494"/>
        <dbReference type="ChEBI" id="CHEBI:133041"/>
        <dbReference type="EC" id="2.3.2.29"/>
    </reaction>
</comment>
<comment type="catalytic activity">
    <reaction evidence="1">
        <text>N-terminal L-aspartyl-[protein] + L-leucyl-tRNA(Leu) = N-terminal L-leucyl-L-aspartyl-[protein] + tRNA(Leu) + H(+)</text>
        <dbReference type="Rhea" id="RHEA:50420"/>
        <dbReference type="Rhea" id="RHEA-COMP:9613"/>
        <dbReference type="Rhea" id="RHEA-COMP:9622"/>
        <dbReference type="Rhea" id="RHEA-COMP:12669"/>
        <dbReference type="Rhea" id="RHEA-COMP:12674"/>
        <dbReference type="ChEBI" id="CHEBI:15378"/>
        <dbReference type="ChEBI" id="CHEBI:64720"/>
        <dbReference type="ChEBI" id="CHEBI:78442"/>
        <dbReference type="ChEBI" id="CHEBI:78494"/>
        <dbReference type="ChEBI" id="CHEBI:133042"/>
        <dbReference type="EC" id="2.3.2.29"/>
    </reaction>
</comment>
<comment type="subcellular location">
    <subcellularLocation>
        <location evidence="1">Cytoplasm</location>
    </subcellularLocation>
</comment>
<comment type="similarity">
    <text evidence="1">Belongs to the R-transferase family. Bpt subfamily.</text>
</comment>
<dbReference type="EC" id="2.3.2.29" evidence="1"/>
<dbReference type="EMBL" id="CP000377">
    <property type="protein sequence ID" value="ABF63615.1"/>
    <property type="molecule type" value="Genomic_DNA"/>
</dbReference>
<dbReference type="RefSeq" id="WP_011538227.1">
    <property type="nucleotide sequence ID" value="NC_008044.1"/>
</dbReference>
<dbReference type="SMR" id="Q1GIA1"/>
<dbReference type="STRING" id="292414.TM1040_0882"/>
<dbReference type="KEGG" id="sit:TM1040_0882"/>
<dbReference type="eggNOG" id="COG2935">
    <property type="taxonomic scope" value="Bacteria"/>
</dbReference>
<dbReference type="HOGENOM" id="CLU_077607_1_0_5"/>
<dbReference type="OrthoDB" id="9782022at2"/>
<dbReference type="Proteomes" id="UP000000636">
    <property type="component" value="Chromosome"/>
</dbReference>
<dbReference type="GO" id="GO:0005737">
    <property type="term" value="C:cytoplasm"/>
    <property type="evidence" value="ECO:0007669"/>
    <property type="project" value="UniProtKB-SubCell"/>
</dbReference>
<dbReference type="GO" id="GO:0004057">
    <property type="term" value="F:arginyl-tRNA--protein transferase activity"/>
    <property type="evidence" value="ECO:0007669"/>
    <property type="project" value="InterPro"/>
</dbReference>
<dbReference type="GO" id="GO:0008914">
    <property type="term" value="F:leucyl-tRNA--protein transferase activity"/>
    <property type="evidence" value="ECO:0007669"/>
    <property type="project" value="UniProtKB-UniRule"/>
</dbReference>
<dbReference type="GO" id="GO:0071596">
    <property type="term" value="P:ubiquitin-dependent protein catabolic process via the N-end rule pathway"/>
    <property type="evidence" value="ECO:0007669"/>
    <property type="project" value="InterPro"/>
</dbReference>
<dbReference type="HAMAP" id="MF_00689">
    <property type="entry name" value="Bpt"/>
    <property type="match status" value="1"/>
</dbReference>
<dbReference type="InterPro" id="IPR016181">
    <property type="entry name" value="Acyl_CoA_acyltransferase"/>
</dbReference>
<dbReference type="InterPro" id="IPR017138">
    <property type="entry name" value="Asp_Glu_LeuTrfase"/>
</dbReference>
<dbReference type="InterPro" id="IPR030700">
    <property type="entry name" value="N-end_Aminoacyl_Trfase"/>
</dbReference>
<dbReference type="InterPro" id="IPR007472">
    <property type="entry name" value="N-end_Aminoacyl_Trfase_C"/>
</dbReference>
<dbReference type="InterPro" id="IPR007471">
    <property type="entry name" value="N-end_Aminoacyl_Trfase_N"/>
</dbReference>
<dbReference type="NCBIfam" id="NF002341">
    <property type="entry name" value="PRK01305.1-1"/>
    <property type="match status" value="1"/>
</dbReference>
<dbReference type="NCBIfam" id="NF002342">
    <property type="entry name" value="PRK01305.1-3"/>
    <property type="match status" value="1"/>
</dbReference>
<dbReference type="NCBIfam" id="NF002343">
    <property type="entry name" value="PRK01305.1-4"/>
    <property type="match status" value="1"/>
</dbReference>
<dbReference type="NCBIfam" id="NF002346">
    <property type="entry name" value="PRK01305.2-3"/>
    <property type="match status" value="1"/>
</dbReference>
<dbReference type="PANTHER" id="PTHR21367">
    <property type="entry name" value="ARGININE-TRNA-PROTEIN TRANSFERASE 1"/>
    <property type="match status" value="1"/>
</dbReference>
<dbReference type="PANTHER" id="PTHR21367:SF1">
    <property type="entry name" value="ARGINYL-TRNA--PROTEIN TRANSFERASE 1"/>
    <property type="match status" value="1"/>
</dbReference>
<dbReference type="Pfam" id="PF04377">
    <property type="entry name" value="ATE_C"/>
    <property type="match status" value="1"/>
</dbReference>
<dbReference type="Pfam" id="PF04376">
    <property type="entry name" value="ATE_N"/>
    <property type="match status" value="1"/>
</dbReference>
<dbReference type="PIRSF" id="PIRSF037208">
    <property type="entry name" value="ATE_pro_prd"/>
    <property type="match status" value="1"/>
</dbReference>
<dbReference type="SUPFAM" id="SSF55729">
    <property type="entry name" value="Acyl-CoA N-acyltransferases (Nat)"/>
    <property type="match status" value="1"/>
</dbReference>
<protein>
    <recommendedName>
        <fullName evidence="1">Aspartate/glutamate leucyltransferase</fullName>
        <ecNumber evidence="1">2.3.2.29</ecNumber>
    </recommendedName>
</protein>
<gene>
    <name evidence="1" type="primary">bpt</name>
    <name type="ordered locus">TM1040_0882</name>
</gene>
<name>BPT_RUEST</name>
<sequence length="274" mass="30928">MRHTLPIAPQFYVTAPQPCPYLEGRMERKLFTSLQGDGVEQLNNSLSQQGFRRSQNVLYRPSCSDCSACMSARISVADFKPTRSQRKTLNRNRHLDRRATSPWATEDQYALFRDYLDQRHADGGMADMDVFEYAAMVEETPIRTRVVEYTDLDTNALTAVSLTDVLEDGLSMVYSFYAPNLPQNSLGTFMVLDHIEIAREAGLPYVYLGYWVPGSQKMGYKAKFSGLEVYFGGEWTPLKDPESFTAEDHPLSTAPVAEQVANIQLPQGTSPKKR</sequence>
<organism>
    <name type="scientific">Ruegeria sp. (strain TM1040)</name>
    <name type="common">Silicibacter sp.</name>
    <dbReference type="NCBI Taxonomy" id="292414"/>
    <lineage>
        <taxon>Bacteria</taxon>
        <taxon>Pseudomonadati</taxon>
        <taxon>Pseudomonadota</taxon>
        <taxon>Alphaproteobacteria</taxon>
        <taxon>Rhodobacterales</taxon>
        <taxon>Roseobacteraceae</taxon>
        <taxon>Ruegeria</taxon>
    </lineage>
</organism>
<feature type="chain" id="PRO_0000263219" description="Aspartate/glutamate leucyltransferase">
    <location>
        <begin position="1"/>
        <end position="274"/>
    </location>
</feature>
<proteinExistence type="inferred from homology"/>